<name>LEUC_CAMHC</name>
<reference key="1">
    <citation type="submission" date="2007-07" db="EMBL/GenBank/DDBJ databases">
        <title>Complete genome sequence of Campylobacter hominis ATCC BAA-381, a commensal isolated from the human gastrointestinal tract.</title>
        <authorList>
            <person name="Fouts D.E."/>
            <person name="Mongodin E.F."/>
            <person name="Puiu D."/>
            <person name="Sebastian Y."/>
            <person name="Miller W.G."/>
            <person name="Mandrell R.E."/>
            <person name="Nelson K.E."/>
        </authorList>
    </citation>
    <scope>NUCLEOTIDE SEQUENCE [LARGE SCALE GENOMIC DNA]</scope>
    <source>
        <strain>ATCC BAA-381 / DSM 21671 / CCUG 45161 / LMG 19568 / NCTC 13146 / CH001A</strain>
    </source>
</reference>
<gene>
    <name evidence="1" type="primary">leuC</name>
    <name type="ordered locus">CHAB381_0124</name>
</gene>
<comment type="function">
    <text evidence="1">Catalyzes the isomerization between 2-isopropylmalate and 3-isopropylmalate, via the formation of 2-isopropylmaleate.</text>
</comment>
<comment type="catalytic activity">
    <reaction evidence="1">
        <text>(2R,3S)-3-isopropylmalate = (2S)-2-isopropylmalate</text>
        <dbReference type="Rhea" id="RHEA:32287"/>
        <dbReference type="ChEBI" id="CHEBI:1178"/>
        <dbReference type="ChEBI" id="CHEBI:35121"/>
        <dbReference type="EC" id="4.2.1.33"/>
    </reaction>
</comment>
<comment type="cofactor">
    <cofactor evidence="1">
        <name>[4Fe-4S] cluster</name>
        <dbReference type="ChEBI" id="CHEBI:49883"/>
    </cofactor>
    <text evidence="1">Binds 1 [4Fe-4S] cluster per subunit.</text>
</comment>
<comment type="pathway">
    <text evidence="1">Amino-acid biosynthesis; L-leucine biosynthesis; L-leucine from 3-methyl-2-oxobutanoate: step 2/4.</text>
</comment>
<comment type="subunit">
    <text evidence="1">Heterodimer of LeuC and LeuD.</text>
</comment>
<comment type="similarity">
    <text evidence="1">Belongs to the aconitase/IPM isomerase family. LeuC type 2 subfamily.</text>
</comment>
<protein>
    <recommendedName>
        <fullName evidence="1">3-isopropylmalate dehydratase large subunit</fullName>
        <ecNumber evidence="1">4.2.1.33</ecNumber>
    </recommendedName>
    <alternativeName>
        <fullName evidence="1">Alpha-IPM isomerase</fullName>
        <shortName evidence="1">IPMI</shortName>
    </alternativeName>
    <alternativeName>
        <fullName evidence="1">Isopropylmalate isomerase</fullName>
    </alternativeName>
</protein>
<evidence type="ECO:0000255" key="1">
    <source>
        <dbReference type="HAMAP-Rule" id="MF_01027"/>
    </source>
</evidence>
<organism>
    <name type="scientific">Campylobacter hominis (strain ATCC BAA-381 / DSM 21671 / CCUG 45161 / LMG 19568 / NCTC 13146 / CH001A)</name>
    <dbReference type="NCBI Taxonomy" id="360107"/>
    <lineage>
        <taxon>Bacteria</taxon>
        <taxon>Pseudomonadati</taxon>
        <taxon>Campylobacterota</taxon>
        <taxon>Epsilonproteobacteria</taxon>
        <taxon>Campylobacterales</taxon>
        <taxon>Campylobacteraceae</taxon>
        <taxon>Campylobacter</taxon>
    </lineage>
</organism>
<keyword id="KW-0004">4Fe-4S</keyword>
<keyword id="KW-0028">Amino-acid biosynthesis</keyword>
<keyword id="KW-0100">Branched-chain amino acid biosynthesis</keyword>
<keyword id="KW-0408">Iron</keyword>
<keyword id="KW-0411">Iron-sulfur</keyword>
<keyword id="KW-0432">Leucine biosynthesis</keyword>
<keyword id="KW-0456">Lyase</keyword>
<keyword id="KW-0479">Metal-binding</keyword>
<keyword id="KW-1185">Reference proteome</keyword>
<feature type="chain" id="PRO_1000063642" description="3-isopropylmalate dehydratase large subunit">
    <location>
        <begin position="1"/>
        <end position="419"/>
    </location>
</feature>
<feature type="binding site" evidence="1">
    <location>
        <position position="301"/>
    </location>
    <ligand>
        <name>[4Fe-4S] cluster</name>
        <dbReference type="ChEBI" id="CHEBI:49883"/>
    </ligand>
</feature>
<feature type="binding site" evidence="1">
    <location>
        <position position="361"/>
    </location>
    <ligand>
        <name>[4Fe-4S] cluster</name>
        <dbReference type="ChEBI" id="CHEBI:49883"/>
    </ligand>
</feature>
<feature type="binding site" evidence="1">
    <location>
        <position position="364"/>
    </location>
    <ligand>
        <name>[4Fe-4S] cluster</name>
        <dbReference type="ChEBI" id="CHEBI:49883"/>
    </ligand>
</feature>
<dbReference type="EC" id="4.2.1.33" evidence="1"/>
<dbReference type="EMBL" id="CP000776">
    <property type="protein sequence ID" value="ABS51642.1"/>
    <property type="molecule type" value="Genomic_DNA"/>
</dbReference>
<dbReference type="RefSeq" id="WP_011991584.1">
    <property type="nucleotide sequence ID" value="NC_009714.1"/>
</dbReference>
<dbReference type="SMR" id="A7HZP6"/>
<dbReference type="STRING" id="360107.CHAB381_0124"/>
<dbReference type="KEGG" id="cha:CHAB381_0124"/>
<dbReference type="eggNOG" id="COG0065">
    <property type="taxonomic scope" value="Bacteria"/>
</dbReference>
<dbReference type="HOGENOM" id="CLU_006714_3_4_7"/>
<dbReference type="OrthoDB" id="9764318at2"/>
<dbReference type="UniPathway" id="UPA00048">
    <property type="reaction ID" value="UER00071"/>
</dbReference>
<dbReference type="Proteomes" id="UP000002407">
    <property type="component" value="Chromosome"/>
</dbReference>
<dbReference type="GO" id="GO:0003861">
    <property type="term" value="F:3-isopropylmalate dehydratase activity"/>
    <property type="evidence" value="ECO:0007669"/>
    <property type="project" value="UniProtKB-UniRule"/>
</dbReference>
<dbReference type="GO" id="GO:0051539">
    <property type="term" value="F:4 iron, 4 sulfur cluster binding"/>
    <property type="evidence" value="ECO:0007669"/>
    <property type="project" value="UniProtKB-KW"/>
</dbReference>
<dbReference type="GO" id="GO:0046872">
    <property type="term" value="F:metal ion binding"/>
    <property type="evidence" value="ECO:0007669"/>
    <property type="project" value="UniProtKB-KW"/>
</dbReference>
<dbReference type="GO" id="GO:0009098">
    <property type="term" value="P:L-leucine biosynthetic process"/>
    <property type="evidence" value="ECO:0007669"/>
    <property type="project" value="UniProtKB-UniRule"/>
</dbReference>
<dbReference type="CDD" id="cd01583">
    <property type="entry name" value="IPMI"/>
    <property type="match status" value="1"/>
</dbReference>
<dbReference type="Gene3D" id="3.30.499.10">
    <property type="entry name" value="Aconitase, domain 3"/>
    <property type="match status" value="2"/>
</dbReference>
<dbReference type="HAMAP" id="MF_01027">
    <property type="entry name" value="LeuC_type2"/>
    <property type="match status" value="1"/>
</dbReference>
<dbReference type="InterPro" id="IPR015931">
    <property type="entry name" value="Acnase/IPM_dHydase_lsu_aba_1/3"/>
</dbReference>
<dbReference type="InterPro" id="IPR001030">
    <property type="entry name" value="Acoase/IPM_deHydtase_lsu_aba"/>
</dbReference>
<dbReference type="InterPro" id="IPR018136">
    <property type="entry name" value="Aconitase_4Fe-4S_BS"/>
</dbReference>
<dbReference type="InterPro" id="IPR036008">
    <property type="entry name" value="Aconitase_4Fe-4S_dom"/>
</dbReference>
<dbReference type="InterPro" id="IPR011826">
    <property type="entry name" value="HAcnase/IPMdehydase_lsu_prok"/>
</dbReference>
<dbReference type="InterPro" id="IPR006251">
    <property type="entry name" value="Homoacnase/IPMdehydase_lsu"/>
</dbReference>
<dbReference type="InterPro" id="IPR050067">
    <property type="entry name" value="IPM_dehydratase_rel_enz"/>
</dbReference>
<dbReference type="InterPro" id="IPR033941">
    <property type="entry name" value="IPMI_cat"/>
</dbReference>
<dbReference type="InterPro" id="IPR011823">
    <property type="entry name" value="IsopropMal_deHydtase_lsu_bac"/>
</dbReference>
<dbReference type="NCBIfam" id="TIGR01343">
    <property type="entry name" value="hacA_fam"/>
    <property type="match status" value="1"/>
</dbReference>
<dbReference type="NCBIfam" id="TIGR02086">
    <property type="entry name" value="IPMI_arch"/>
    <property type="match status" value="1"/>
</dbReference>
<dbReference type="NCBIfam" id="TIGR02083">
    <property type="entry name" value="LEU2"/>
    <property type="match status" value="1"/>
</dbReference>
<dbReference type="NCBIfam" id="NF001614">
    <property type="entry name" value="PRK00402.1"/>
    <property type="match status" value="1"/>
</dbReference>
<dbReference type="PANTHER" id="PTHR43822:SF16">
    <property type="entry name" value="3-ISOPROPYLMALATE DEHYDRATASE LARGE SUBUNIT 2"/>
    <property type="match status" value="1"/>
</dbReference>
<dbReference type="PANTHER" id="PTHR43822">
    <property type="entry name" value="HOMOACONITASE, MITOCHONDRIAL-RELATED"/>
    <property type="match status" value="1"/>
</dbReference>
<dbReference type="Pfam" id="PF00330">
    <property type="entry name" value="Aconitase"/>
    <property type="match status" value="1"/>
</dbReference>
<dbReference type="PRINTS" id="PR00415">
    <property type="entry name" value="ACONITASE"/>
</dbReference>
<dbReference type="SUPFAM" id="SSF53732">
    <property type="entry name" value="Aconitase iron-sulfur domain"/>
    <property type="match status" value="1"/>
</dbReference>
<dbReference type="PROSITE" id="PS00450">
    <property type="entry name" value="ACONITASE_1"/>
    <property type="match status" value="1"/>
</dbReference>
<dbReference type="PROSITE" id="PS01244">
    <property type="entry name" value="ACONITASE_2"/>
    <property type="match status" value="1"/>
</dbReference>
<sequence length="419" mass="45489">MKQTITEKIFSDHVGAQVYAGEIVESKIDMVIGNDITTPISIRQFEKSGAAHLANPDGFAIVMDHYIPTKDIASANQAKISREFAYKHNLKNFFDEKDIGIEHALIPEKGLVVSGDVIIGADSHTCTHGALGAFSTGMGSTDIAYAMITGKNWFKVPKSIKVVLKGRLGEHIYGKDLILKLISMIGVDGALYKALEFCGDIQNIDMDSRFSMCNMAIEAGAKSGIIAADEITKQFFKDKNLRAEPKYFYSDEDAFYERTVEIDMSALEPMVAYPFLPSNGKTITQAVADELKIDQAFIGSCTNGRLSDLRIAAEILKGKKVAKKTRLIITPATQKIYKAAEHEGLIDIFIDAGAVVSNPTCGACLGGYMGILGANERCVSTTNRNFVGRMGDRTSEVYLANSAVVAASAITGKITDPRR</sequence>
<proteinExistence type="inferred from homology"/>
<accession>A7HZP6</accession>